<protein>
    <recommendedName>
        <fullName evidence="1">Homoserine O-acetyltransferase</fullName>
        <shortName evidence="1">HAT</shortName>
        <ecNumber evidence="1">2.3.1.31</ecNumber>
    </recommendedName>
    <alternativeName>
        <fullName evidence="1">Homoserine transacetylase</fullName>
        <shortName evidence="1">HTA</shortName>
    </alternativeName>
</protein>
<comment type="function">
    <text evidence="1">Transfers an acetyl group from acetyl-CoA to L-homoserine, forming acetyl-L-homoserine.</text>
</comment>
<comment type="catalytic activity">
    <reaction evidence="1">
        <text>L-homoserine + acetyl-CoA = O-acetyl-L-homoserine + CoA</text>
        <dbReference type="Rhea" id="RHEA:13701"/>
        <dbReference type="ChEBI" id="CHEBI:57287"/>
        <dbReference type="ChEBI" id="CHEBI:57288"/>
        <dbReference type="ChEBI" id="CHEBI:57476"/>
        <dbReference type="ChEBI" id="CHEBI:57716"/>
        <dbReference type="EC" id="2.3.1.31"/>
    </reaction>
</comment>
<comment type="pathway">
    <text evidence="1">Amino-acid biosynthesis; L-methionine biosynthesis via de novo pathway; O-acetyl-L-homoserine from L-homoserine: step 1/1.</text>
</comment>
<comment type="subcellular location">
    <subcellularLocation>
        <location evidence="1">Cytoplasm</location>
    </subcellularLocation>
</comment>
<comment type="similarity">
    <text evidence="1">Belongs to the MetA family.</text>
</comment>
<organism>
    <name type="scientific">Thermotoga sp. (strain RQ2)</name>
    <dbReference type="NCBI Taxonomy" id="126740"/>
    <lineage>
        <taxon>Bacteria</taxon>
        <taxon>Thermotogati</taxon>
        <taxon>Thermotogota</taxon>
        <taxon>Thermotogae</taxon>
        <taxon>Thermotogales</taxon>
        <taxon>Thermotogaceae</taxon>
        <taxon>Thermotoga</taxon>
    </lineage>
</organism>
<keyword id="KW-0012">Acyltransferase</keyword>
<keyword id="KW-0028">Amino-acid biosynthesis</keyword>
<keyword id="KW-0963">Cytoplasm</keyword>
<keyword id="KW-0486">Methionine biosynthesis</keyword>
<keyword id="KW-0808">Transferase</keyword>
<accession>B1LCF0</accession>
<evidence type="ECO:0000255" key="1">
    <source>
        <dbReference type="HAMAP-Rule" id="MF_00295"/>
    </source>
</evidence>
<reference key="1">
    <citation type="journal article" date="2011" name="J. Bacteriol.">
        <title>Genome sequence of Thermotoga sp. strain RQ2, a hyperthermophilic bacterium isolated from a geothermally heated region of the seafloor near Ribeira Quente, the Azores.</title>
        <authorList>
            <person name="Swithers K.S."/>
            <person name="DiPippo J.L."/>
            <person name="Bruce D.C."/>
            <person name="Detter C."/>
            <person name="Tapia R."/>
            <person name="Han S."/>
            <person name="Saunders E."/>
            <person name="Goodwin L.A."/>
            <person name="Han J."/>
            <person name="Woyke T."/>
            <person name="Pitluck S."/>
            <person name="Pennacchio L."/>
            <person name="Nolan M."/>
            <person name="Mikhailova N."/>
            <person name="Lykidis A."/>
            <person name="Land M.L."/>
            <person name="Brettin T."/>
            <person name="Stetter K.O."/>
            <person name="Nelson K.E."/>
            <person name="Gogarten J.P."/>
            <person name="Noll K.M."/>
        </authorList>
    </citation>
    <scope>NUCLEOTIDE SEQUENCE [LARGE SCALE GENOMIC DNA]</scope>
    <source>
        <strain>RQ2</strain>
    </source>
</reference>
<proteinExistence type="inferred from homology"/>
<feature type="chain" id="PRO_1000115200" description="Homoserine O-acetyltransferase">
    <location>
        <begin position="1"/>
        <end position="304"/>
    </location>
</feature>
<feature type="active site" description="Acyl-thioester intermediate" evidence="1">
    <location>
        <position position="142"/>
    </location>
</feature>
<feature type="active site" description="Proton acceptor" evidence="1">
    <location>
        <position position="234"/>
    </location>
</feature>
<feature type="active site" evidence="1">
    <location>
        <position position="236"/>
    </location>
</feature>
<feature type="binding site" evidence="1">
    <location>
        <position position="163"/>
    </location>
    <ligand>
        <name>substrate</name>
    </ligand>
</feature>
<feature type="binding site" evidence="1">
    <location>
        <position position="191"/>
    </location>
    <ligand>
        <name>substrate</name>
    </ligand>
</feature>
<feature type="binding site" evidence="1">
    <location>
        <position position="248"/>
    </location>
    <ligand>
        <name>substrate</name>
    </ligand>
</feature>
<feature type="site" description="Important for acyl-CoA specificity" evidence="1">
    <location>
        <position position="111"/>
    </location>
</feature>
<feature type="site" description="Important for substrate specificity" evidence="1">
    <location>
        <position position="191"/>
    </location>
</feature>
<sequence>MPINVPSGLPAVKVLAKEGIFVMTEKRAIHQDIRPLEILILNLMPDKIKTEIQLLRLLGNTPLQVNVTLLYTETHKPKHTPIEHILKFYTTFSAVKDRKFDGFIITGAPVELLPFEEVDYWEELTEIMEWSRHNVYSTMFICWAAQAGLYYFYGIPKYELPQKLSGVYKHRVAKDSVLFRGHDDFFWAPHSRYTEVKKEDIDKVPELEILAESDEAGVYVVANKSERQIFVTGHPEYDRYTLRDEYYRDIGRNLKVPIPANYFPNDDPTKTPILTWWSHAHLFFSNWLNYCIYQKTPYRLEDIH</sequence>
<gene>
    <name evidence="1" type="primary">metAA</name>
    <name type="ordered locus">TRQ2_0046</name>
</gene>
<dbReference type="EC" id="2.3.1.31" evidence="1"/>
<dbReference type="EMBL" id="CP000969">
    <property type="protein sequence ID" value="ACB08408.1"/>
    <property type="molecule type" value="Genomic_DNA"/>
</dbReference>
<dbReference type="SMR" id="B1LCF0"/>
<dbReference type="KEGG" id="trq:TRQ2_0046"/>
<dbReference type="HOGENOM" id="CLU_057851_0_1_0"/>
<dbReference type="UniPathway" id="UPA00051">
    <property type="reaction ID" value="UER00074"/>
</dbReference>
<dbReference type="Proteomes" id="UP000001687">
    <property type="component" value="Chromosome"/>
</dbReference>
<dbReference type="GO" id="GO:0005737">
    <property type="term" value="C:cytoplasm"/>
    <property type="evidence" value="ECO:0007669"/>
    <property type="project" value="UniProtKB-SubCell"/>
</dbReference>
<dbReference type="GO" id="GO:0004414">
    <property type="term" value="F:homoserine O-acetyltransferase activity"/>
    <property type="evidence" value="ECO:0007669"/>
    <property type="project" value="UniProtKB-EC"/>
</dbReference>
<dbReference type="GO" id="GO:0008899">
    <property type="term" value="F:homoserine O-succinyltransferase activity"/>
    <property type="evidence" value="ECO:0007669"/>
    <property type="project" value="UniProtKB-UniRule"/>
</dbReference>
<dbReference type="GO" id="GO:0019281">
    <property type="term" value="P:L-methionine biosynthetic process from homoserine via O-succinyl-L-homoserine and cystathionine"/>
    <property type="evidence" value="ECO:0007669"/>
    <property type="project" value="InterPro"/>
</dbReference>
<dbReference type="CDD" id="cd03131">
    <property type="entry name" value="GATase1_HTS"/>
    <property type="match status" value="1"/>
</dbReference>
<dbReference type="FunFam" id="3.40.50.880:FF:000004">
    <property type="entry name" value="Homoserine O-succinyltransferase"/>
    <property type="match status" value="1"/>
</dbReference>
<dbReference type="Gene3D" id="3.40.50.880">
    <property type="match status" value="1"/>
</dbReference>
<dbReference type="HAMAP" id="MF_00295">
    <property type="entry name" value="MetA_acyltransf"/>
    <property type="match status" value="1"/>
</dbReference>
<dbReference type="InterPro" id="IPR029062">
    <property type="entry name" value="Class_I_gatase-like"/>
</dbReference>
<dbReference type="InterPro" id="IPR005697">
    <property type="entry name" value="HST_MetA"/>
</dbReference>
<dbReference type="InterPro" id="IPR033752">
    <property type="entry name" value="MetA_family"/>
</dbReference>
<dbReference type="NCBIfam" id="TIGR01001">
    <property type="entry name" value="metA"/>
    <property type="match status" value="1"/>
</dbReference>
<dbReference type="PANTHER" id="PTHR20919">
    <property type="entry name" value="HOMOSERINE O-SUCCINYLTRANSFERASE"/>
    <property type="match status" value="1"/>
</dbReference>
<dbReference type="PANTHER" id="PTHR20919:SF0">
    <property type="entry name" value="HOMOSERINE O-SUCCINYLTRANSFERASE"/>
    <property type="match status" value="1"/>
</dbReference>
<dbReference type="Pfam" id="PF04204">
    <property type="entry name" value="HTS"/>
    <property type="match status" value="1"/>
</dbReference>
<dbReference type="PIRSF" id="PIRSF000450">
    <property type="entry name" value="H_ser_succinyltr"/>
    <property type="match status" value="1"/>
</dbReference>
<dbReference type="SUPFAM" id="SSF52317">
    <property type="entry name" value="Class I glutamine amidotransferase-like"/>
    <property type="match status" value="1"/>
</dbReference>
<name>METAA_THESQ</name>